<proteinExistence type="evidence at transcript level"/>
<sequence>MPNWGGGKKCGVCQKTVYFAEEVQCEGNSFHKSCFLCMVCKKNLDSTTVAVHGEEIYCKSCYGKKYGPKGYGYGQGAGTLSTDKGESLGIKHEESPGHRPTTNPNASKFAQKIGGSERCPRCSQAVYAAEKVIGAGKSWHKACFRCAKCGKGLESTTLADKDGEIYCKGCYAKNFGPKGFGFGQGAGALVHSE</sequence>
<gene>
    <name type="primary">CSRP1</name>
</gene>
<name>CSRP1_PONAB</name>
<keyword id="KW-0007">Acetylation</keyword>
<keyword id="KW-1017">Isopeptide bond</keyword>
<keyword id="KW-0440">LIM domain</keyword>
<keyword id="KW-0479">Metal-binding</keyword>
<keyword id="KW-0539">Nucleus</keyword>
<keyword id="KW-0597">Phosphoprotein</keyword>
<keyword id="KW-1185">Reference proteome</keyword>
<keyword id="KW-0677">Repeat</keyword>
<keyword id="KW-0832">Ubl conjugation</keyword>
<keyword id="KW-0862">Zinc</keyword>
<reference key="1">
    <citation type="submission" date="2004-11" db="EMBL/GenBank/DDBJ databases">
        <authorList>
            <consortium name="The German cDNA consortium"/>
        </authorList>
    </citation>
    <scope>NUCLEOTIDE SEQUENCE [LARGE SCALE MRNA]</scope>
    <source>
        <tissue>Kidney</tissue>
    </source>
</reference>
<organism>
    <name type="scientific">Pongo abelii</name>
    <name type="common">Sumatran orangutan</name>
    <name type="synonym">Pongo pygmaeus abelii</name>
    <dbReference type="NCBI Taxonomy" id="9601"/>
    <lineage>
        <taxon>Eukaryota</taxon>
        <taxon>Metazoa</taxon>
        <taxon>Chordata</taxon>
        <taxon>Craniata</taxon>
        <taxon>Vertebrata</taxon>
        <taxon>Euteleostomi</taxon>
        <taxon>Mammalia</taxon>
        <taxon>Eutheria</taxon>
        <taxon>Euarchontoglires</taxon>
        <taxon>Primates</taxon>
        <taxon>Haplorrhini</taxon>
        <taxon>Catarrhini</taxon>
        <taxon>Hominidae</taxon>
        <taxon>Pongo</taxon>
    </lineage>
</organism>
<dbReference type="EMBL" id="CR858184">
    <property type="protein sequence ID" value="CAH90423.1"/>
    <property type="molecule type" value="mRNA"/>
</dbReference>
<dbReference type="RefSeq" id="NP_001125211.1">
    <property type="nucleotide sequence ID" value="NM_001131739.1"/>
</dbReference>
<dbReference type="SMR" id="Q5RCT4"/>
<dbReference type="STRING" id="9601.ENSPPYP00000000406"/>
<dbReference type="GeneID" id="100172103"/>
<dbReference type="KEGG" id="pon:100172103"/>
<dbReference type="CTD" id="1465"/>
<dbReference type="eggNOG" id="KOG1700">
    <property type="taxonomic scope" value="Eukaryota"/>
</dbReference>
<dbReference type="InParanoid" id="Q5RCT4"/>
<dbReference type="OrthoDB" id="8062037at2759"/>
<dbReference type="Proteomes" id="UP000001595">
    <property type="component" value="Unplaced"/>
</dbReference>
<dbReference type="GO" id="GO:0005634">
    <property type="term" value="C:nucleus"/>
    <property type="evidence" value="ECO:0007669"/>
    <property type="project" value="UniProtKB-SubCell"/>
</dbReference>
<dbReference type="GO" id="GO:0030018">
    <property type="term" value="C:Z disc"/>
    <property type="evidence" value="ECO:0007669"/>
    <property type="project" value="TreeGrafter"/>
</dbReference>
<dbReference type="GO" id="GO:0042805">
    <property type="term" value="F:actinin binding"/>
    <property type="evidence" value="ECO:0007669"/>
    <property type="project" value="TreeGrafter"/>
</dbReference>
<dbReference type="GO" id="GO:0046872">
    <property type="term" value="F:metal ion binding"/>
    <property type="evidence" value="ECO:0007669"/>
    <property type="project" value="UniProtKB-KW"/>
</dbReference>
<dbReference type="GO" id="GO:0008307">
    <property type="term" value="F:structural constituent of muscle"/>
    <property type="evidence" value="ECO:0007669"/>
    <property type="project" value="TreeGrafter"/>
</dbReference>
<dbReference type="GO" id="GO:0060537">
    <property type="term" value="P:muscle tissue development"/>
    <property type="evidence" value="ECO:0007669"/>
    <property type="project" value="TreeGrafter"/>
</dbReference>
<dbReference type="GO" id="GO:0045214">
    <property type="term" value="P:sarcomere organization"/>
    <property type="evidence" value="ECO:0007669"/>
    <property type="project" value="TreeGrafter"/>
</dbReference>
<dbReference type="CDD" id="cd09479">
    <property type="entry name" value="LIM1_CRP1"/>
    <property type="match status" value="1"/>
</dbReference>
<dbReference type="CDD" id="cd09403">
    <property type="entry name" value="LIM2_CRP"/>
    <property type="match status" value="1"/>
</dbReference>
<dbReference type="FunFam" id="2.10.110.10:FF:000001">
    <property type="entry name" value="Cysteine and glycine-rich protein 1"/>
    <property type="match status" value="1"/>
</dbReference>
<dbReference type="FunFam" id="2.10.110.10:FF:000124">
    <property type="entry name" value="Cysteine and glycine-rich protein 1a"/>
    <property type="match status" value="1"/>
</dbReference>
<dbReference type="Gene3D" id="2.10.110.10">
    <property type="entry name" value="Cysteine Rich Protein"/>
    <property type="match status" value="2"/>
</dbReference>
<dbReference type="InterPro" id="IPR001781">
    <property type="entry name" value="Znf_LIM"/>
</dbReference>
<dbReference type="PANTHER" id="PTHR24215:SF23">
    <property type="entry name" value="CYSTEINE AND GLYCINE-RICH PROTEIN 1"/>
    <property type="match status" value="1"/>
</dbReference>
<dbReference type="PANTHER" id="PTHR24215">
    <property type="entry name" value="RHO-GTPASE-ACTIVATING PROTEIN LRG1"/>
    <property type="match status" value="1"/>
</dbReference>
<dbReference type="Pfam" id="PF00412">
    <property type="entry name" value="LIM"/>
    <property type="match status" value="2"/>
</dbReference>
<dbReference type="SMART" id="SM00132">
    <property type="entry name" value="LIM"/>
    <property type="match status" value="2"/>
</dbReference>
<dbReference type="SUPFAM" id="SSF57716">
    <property type="entry name" value="Glucocorticoid receptor-like (DNA-binding domain)"/>
    <property type="match status" value="4"/>
</dbReference>
<dbReference type="PROSITE" id="PS00478">
    <property type="entry name" value="LIM_DOMAIN_1"/>
    <property type="match status" value="2"/>
</dbReference>
<dbReference type="PROSITE" id="PS50023">
    <property type="entry name" value="LIM_DOMAIN_2"/>
    <property type="match status" value="2"/>
</dbReference>
<feature type="chain" id="PRO_0000075717" description="Cysteine and glycine-rich protein 1">
    <location>
        <begin position="1"/>
        <end position="193"/>
    </location>
</feature>
<feature type="domain" description="LIM zinc-binding 1" evidence="6">
    <location>
        <begin position="10"/>
        <end position="61"/>
    </location>
</feature>
<feature type="domain" description="LIM zinc-binding 2" evidence="6">
    <location>
        <begin position="119"/>
        <end position="170"/>
    </location>
</feature>
<feature type="short sequence motif" description="Nuclear localization signal" evidence="5">
    <location>
        <begin position="64"/>
        <end position="69"/>
    </location>
</feature>
<feature type="modified residue" description="Phosphoserine" evidence="3">
    <location>
        <position position="81"/>
    </location>
</feature>
<feature type="modified residue" description="N6-acetyllysine" evidence="4">
    <location>
        <position position="84"/>
    </location>
</feature>
<feature type="modified residue" description="N6-acetyllysine" evidence="2">
    <location>
        <position position="112"/>
    </location>
</feature>
<feature type="modified residue" description="N6-acetyllysine" evidence="2">
    <location>
        <position position="131"/>
    </location>
</feature>
<feature type="modified residue" description="N6-acetyllysine" evidence="4">
    <location>
        <position position="137"/>
    </location>
</feature>
<feature type="modified residue" description="N6-acetyllysine" evidence="4">
    <location>
        <position position="161"/>
    </location>
</feature>
<feature type="modified residue" description="Phosphoserine" evidence="2">
    <location>
        <position position="192"/>
    </location>
</feature>
<feature type="cross-link" description="Glycyl lysine isopeptide (Lys-Gly) (interchain with G-Cter in SUMO2)" evidence="2">
    <location>
        <position position="91"/>
    </location>
</feature>
<accession>Q5RCT4</accession>
<comment type="function">
    <text evidence="1">Could play a role in neuronal development.</text>
</comment>
<comment type="subunit">
    <text evidence="2">Interacts with ASCC1; ASCC2 and TRIP4.</text>
</comment>
<comment type="subcellular location">
    <subcellularLocation>
        <location evidence="2">Nucleus</location>
    </subcellularLocation>
</comment>
<evidence type="ECO:0000250" key="1"/>
<evidence type="ECO:0000250" key="2">
    <source>
        <dbReference type="UniProtKB" id="P21291"/>
    </source>
</evidence>
<evidence type="ECO:0000250" key="3">
    <source>
        <dbReference type="UniProtKB" id="P47875"/>
    </source>
</evidence>
<evidence type="ECO:0000250" key="4">
    <source>
        <dbReference type="UniProtKB" id="P97315"/>
    </source>
</evidence>
<evidence type="ECO:0000255" key="5"/>
<evidence type="ECO:0000255" key="6">
    <source>
        <dbReference type="PROSITE-ProRule" id="PRU00125"/>
    </source>
</evidence>
<protein>
    <recommendedName>
        <fullName>Cysteine and glycine-rich protein 1</fullName>
    </recommendedName>
    <alternativeName>
        <fullName>Cysteine-rich protein 1</fullName>
        <shortName>CRP1</shortName>
    </alternativeName>
</protein>